<proteinExistence type="evidence at protein level"/>
<organism>
    <name type="scientific">Saccharomyces cerevisiae (strain ATCC 204508 / S288c)</name>
    <name type="common">Baker's yeast</name>
    <dbReference type="NCBI Taxonomy" id="559292"/>
    <lineage>
        <taxon>Eukaryota</taxon>
        <taxon>Fungi</taxon>
        <taxon>Dikarya</taxon>
        <taxon>Ascomycota</taxon>
        <taxon>Saccharomycotina</taxon>
        <taxon>Saccharomycetes</taxon>
        <taxon>Saccharomycetales</taxon>
        <taxon>Saccharomycetaceae</taxon>
        <taxon>Saccharomyces</taxon>
    </lineage>
</organism>
<comment type="interaction">
    <interactant intactId="EBI-11561">
        <id>P35198</id>
    </interactant>
    <interactant intactId="EBI-8659">
        <id>P02829</id>
        <label>HSP82</label>
    </interactant>
    <organismsDiffer>false</organismsDiffer>
    <experiments>3</experiments>
</comment>
<comment type="similarity">
    <text evidence="2">To yeast STD1/MSN3.</text>
</comment>
<accession>P35198</accession>
<accession>D6VSQ8</accession>
<feature type="chain" id="PRO_0000096625" description="Protein MTH1">
    <location>
        <begin position="1"/>
        <end position="433"/>
    </location>
</feature>
<feature type="region of interest" description="Disordered" evidence="1">
    <location>
        <begin position="1"/>
        <end position="117"/>
    </location>
</feature>
<feature type="compositionally biased region" description="Polar residues" evidence="1">
    <location>
        <begin position="9"/>
        <end position="47"/>
    </location>
</feature>
<feature type="compositionally biased region" description="Low complexity" evidence="1">
    <location>
        <begin position="48"/>
        <end position="64"/>
    </location>
</feature>
<feature type="compositionally biased region" description="Basic and acidic residues" evidence="1">
    <location>
        <begin position="77"/>
        <end position="87"/>
    </location>
</feature>
<dbReference type="EMBL" id="L21933">
    <property type="protein sequence ID" value="AAA18536.1"/>
    <property type="molecule type" value="Unassigned_DNA"/>
</dbReference>
<dbReference type="EMBL" id="U51030">
    <property type="protein sequence ID" value="AAB64457.1"/>
    <property type="molecule type" value="Genomic_DNA"/>
</dbReference>
<dbReference type="EMBL" id="BK006938">
    <property type="protein sequence ID" value="DAA12118.1"/>
    <property type="molecule type" value="Genomic_DNA"/>
</dbReference>
<dbReference type="PIR" id="S46668">
    <property type="entry name" value="S46668"/>
</dbReference>
<dbReference type="RefSeq" id="NP_010563.3">
    <property type="nucleotide sequence ID" value="NM_001180585.3"/>
</dbReference>
<dbReference type="SMR" id="P35198"/>
<dbReference type="BioGRID" id="32330">
    <property type="interactions" value="116"/>
</dbReference>
<dbReference type="DIP" id="DIP-803N"/>
<dbReference type="FunCoup" id="P35198">
    <property type="interactions" value="421"/>
</dbReference>
<dbReference type="IntAct" id="P35198">
    <property type="interactions" value="14"/>
</dbReference>
<dbReference type="MINT" id="P35198"/>
<dbReference type="STRING" id="4932.YDR277C"/>
<dbReference type="iPTMnet" id="P35198"/>
<dbReference type="PaxDb" id="4932-YDR277C"/>
<dbReference type="EnsemblFungi" id="YDR277C_mRNA">
    <property type="protein sequence ID" value="YDR277C"/>
    <property type="gene ID" value="YDR277C"/>
</dbReference>
<dbReference type="GeneID" id="851870"/>
<dbReference type="KEGG" id="sce:YDR277C"/>
<dbReference type="AGR" id="SGD:S000002685"/>
<dbReference type="SGD" id="S000002685">
    <property type="gene designation" value="MTH1"/>
</dbReference>
<dbReference type="VEuPathDB" id="FungiDB:YDR277C"/>
<dbReference type="eggNOG" id="ENOG502QPKX">
    <property type="taxonomic scope" value="Eukaryota"/>
</dbReference>
<dbReference type="GeneTree" id="ENSGT00940000176732"/>
<dbReference type="HOGENOM" id="CLU_049491_0_0_1"/>
<dbReference type="InParanoid" id="P35198"/>
<dbReference type="OMA" id="ANLDYEF"/>
<dbReference type="OrthoDB" id="4081967at2759"/>
<dbReference type="BioCyc" id="YEAST:G3O-29843-MONOMER"/>
<dbReference type="BioGRID-ORCS" id="851870">
    <property type="hits" value="0 hits in 10 CRISPR screens"/>
</dbReference>
<dbReference type="CD-CODE" id="E03F929F">
    <property type="entry name" value="Stress granule"/>
</dbReference>
<dbReference type="PRO" id="PR:P35198"/>
<dbReference type="Proteomes" id="UP000002311">
    <property type="component" value="Chromosome IV"/>
</dbReference>
<dbReference type="RNAct" id="P35198">
    <property type="molecule type" value="protein"/>
</dbReference>
<dbReference type="GO" id="GO:1904659">
    <property type="term" value="P:D-glucose transmembrane transport"/>
    <property type="evidence" value="ECO:0000315"/>
    <property type="project" value="SGD"/>
</dbReference>
<dbReference type="GO" id="GO:0007165">
    <property type="term" value="P:signal transduction"/>
    <property type="evidence" value="ECO:0000315"/>
    <property type="project" value="SGD"/>
</dbReference>
<dbReference type="InterPro" id="IPR035189">
    <property type="entry name" value="Std1/Mth1"/>
</dbReference>
<dbReference type="Pfam" id="PF17235">
    <property type="entry name" value="STD1"/>
    <property type="match status" value="1"/>
</dbReference>
<gene>
    <name type="primary">MTH1</name>
    <name type="ordered locus">YDR277C</name>
    <name type="ORF">D9954.12</name>
</gene>
<keyword id="KW-1185">Reference proteome</keyword>
<name>MTH1_YEAST</name>
<sequence>MFVSPPPATSKNQVLQRRPLESTNSNHGFASSLQAIPENTMSGSDNASFQSLPLSMSSSQSTTSSRRENFVNAPPEYTDRARDEIKKRLLASSPSRRSHHSSSMHSASRRSSVAESGSLLSDNASSYQSSIFSAPSTVHTQLTNDSSFSEFPNHKLITRVSLDEALPKTFYDMYSPDILLADPSNILCNGRPKFTKRELLDWDLNDIRSLLIVEKLRPEWGNQLPEVITVGDNMPQFRLQLLPLYSSDETIIATLVHSDLYMEANLDYEFKLTSAKYTVATARKRHEHITGRNEAVMNLSKPEWRNIIENYLLNIAVEAQCRFDFKQRCSEYKKWKLQQSNLKRPDMPPPSIIPRKNSTETKSLLKKALLKNIQLKNPNNNLDELMMRSSAATNQQGKNKVSLSKEEKATIWSQCQAQVYQRLGLDWQPDSVS</sequence>
<reference key="1">
    <citation type="journal article" date="1994" name="Mol. Cell. Biol.">
        <title>Dosage-dependent modulation of glucose repression by MSN3 (STD1) in Saccharomyces cerevisiae.</title>
        <authorList>
            <person name="Hubbard E.J.A."/>
            <person name="Jiang R."/>
            <person name="Carlson M."/>
        </authorList>
    </citation>
    <scope>NUCLEOTIDE SEQUENCE</scope>
    <source>
        <strain>ATCC 204508 / S288c</strain>
    </source>
</reference>
<reference key="2">
    <citation type="journal article" date="1997" name="Nature">
        <title>The nucleotide sequence of Saccharomyces cerevisiae chromosome IV.</title>
        <authorList>
            <person name="Jacq C."/>
            <person name="Alt-Moerbe J."/>
            <person name="Andre B."/>
            <person name="Arnold W."/>
            <person name="Bahr A."/>
            <person name="Ballesta J.P.G."/>
            <person name="Bargues M."/>
            <person name="Baron L."/>
            <person name="Becker A."/>
            <person name="Biteau N."/>
            <person name="Bloecker H."/>
            <person name="Blugeon C."/>
            <person name="Boskovic J."/>
            <person name="Brandt P."/>
            <person name="Brueckner M."/>
            <person name="Buitrago M.J."/>
            <person name="Coster F."/>
            <person name="Delaveau T."/>
            <person name="del Rey F."/>
            <person name="Dujon B."/>
            <person name="Eide L.G."/>
            <person name="Garcia-Cantalejo J.M."/>
            <person name="Goffeau A."/>
            <person name="Gomez-Peris A."/>
            <person name="Granotier C."/>
            <person name="Hanemann V."/>
            <person name="Hankeln T."/>
            <person name="Hoheisel J.D."/>
            <person name="Jaeger W."/>
            <person name="Jimenez A."/>
            <person name="Jonniaux J.-L."/>
            <person name="Kraemer C."/>
            <person name="Kuester H."/>
            <person name="Laamanen P."/>
            <person name="Legros Y."/>
            <person name="Louis E.J."/>
            <person name="Moeller-Rieker S."/>
            <person name="Monnet A."/>
            <person name="Moro M."/>
            <person name="Mueller-Auer S."/>
            <person name="Nussbaumer B."/>
            <person name="Paricio N."/>
            <person name="Paulin L."/>
            <person name="Perea J."/>
            <person name="Perez-Alonso M."/>
            <person name="Perez-Ortin J.E."/>
            <person name="Pohl T.M."/>
            <person name="Prydz H."/>
            <person name="Purnelle B."/>
            <person name="Rasmussen S.W."/>
            <person name="Remacha M.A."/>
            <person name="Revuelta J.L."/>
            <person name="Rieger M."/>
            <person name="Salom D."/>
            <person name="Saluz H.P."/>
            <person name="Saiz J.E."/>
            <person name="Saren A.-M."/>
            <person name="Schaefer M."/>
            <person name="Scharfe M."/>
            <person name="Schmidt E.R."/>
            <person name="Schneider C."/>
            <person name="Scholler P."/>
            <person name="Schwarz S."/>
            <person name="Soler-Mira A."/>
            <person name="Urrestarazu L.A."/>
            <person name="Verhasselt P."/>
            <person name="Vissers S."/>
            <person name="Voet M."/>
            <person name="Volckaert G."/>
            <person name="Wagner G."/>
            <person name="Wambutt R."/>
            <person name="Wedler E."/>
            <person name="Wedler H."/>
            <person name="Woelfl S."/>
            <person name="Harris D.E."/>
            <person name="Bowman S."/>
            <person name="Brown D."/>
            <person name="Churcher C.M."/>
            <person name="Connor R."/>
            <person name="Dedman K."/>
            <person name="Gentles S."/>
            <person name="Hamlin N."/>
            <person name="Hunt S."/>
            <person name="Jones L."/>
            <person name="McDonald S."/>
            <person name="Murphy L.D."/>
            <person name="Niblett D."/>
            <person name="Odell C."/>
            <person name="Oliver K."/>
            <person name="Rajandream M.A."/>
            <person name="Richards C."/>
            <person name="Shore L."/>
            <person name="Walsh S.V."/>
            <person name="Barrell B.G."/>
            <person name="Dietrich F.S."/>
            <person name="Mulligan J.T."/>
            <person name="Allen E."/>
            <person name="Araujo R."/>
            <person name="Aviles E."/>
            <person name="Berno A."/>
            <person name="Carpenter J."/>
            <person name="Chen E."/>
            <person name="Cherry J.M."/>
            <person name="Chung E."/>
            <person name="Duncan M."/>
            <person name="Hunicke-Smith S."/>
            <person name="Hyman R.W."/>
            <person name="Komp C."/>
            <person name="Lashkari D."/>
            <person name="Lew H."/>
            <person name="Lin D."/>
            <person name="Mosedale D."/>
            <person name="Nakahara K."/>
            <person name="Namath A."/>
            <person name="Oefner P."/>
            <person name="Oh C."/>
            <person name="Petel F.X."/>
            <person name="Roberts D."/>
            <person name="Schramm S."/>
            <person name="Schroeder M."/>
            <person name="Shogren T."/>
            <person name="Shroff N."/>
            <person name="Winant A."/>
            <person name="Yelton M.A."/>
            <person name="Botstein D."/>
            <person name="Davis R.W."/>
            <person name="Johnston M."/>
            <person name="Andrews S."/>
            <person name="Brinkman R."/>
            <person name="Cooper J."/>
            <person name="Ding H."/>
            <person name="Du Z."/>
            <person name="Favello A."/>
            <person name="Fulton L."/>
            <person name="Gattung S."/>
            <person name="Greco T."/>
            <person name="Hallsworth K."/>
            <person name="Hawkins J."/>
            <person name="Hillier L.W."/>
            <person name="Jier M."/>
            <person name="Johnson D."/>
            <person name="Johnston L."/>
            <person name="Kirsten J."/>
            <person name="Kucaba T."/>
            <person name="Langston Y."/>
            <person name="Latreille P."/>
            <person name="Le T."/>
            <person name="Mardis E."/>
            <person name="Menezes S."/>
            <person name="Miller N."/>
            <person name="Nhan M."/>
            <person name="Pauley A."/>
            <person name="Peluso D."/>
            <person name="Rifkin L."/>
            <person name="Riles L."/>
            <person name="Taich A."/>
            <person name="Trevaskis E."/>
            <person name="Vignati D."/>
            <person name="Wilcox L."/>
            <person name="Wohldman P."/>
            <person name="Vaudin M."/>
            <person name="Wilson R."/>
            <person name="Waterston R."/>
            <person name="Albermann K."/>
            <person name="Hani J."/>
            <person name="Heumann K."/>
            <person name="Kleine K."/>
            <person name="Mewes H.-W."/>
            <person name="Zollner A."/>
            <person name="Zaccaria P."/>
        </authorList>
    </citation>
    <scope>NUCLEOTIDE SEQUENCE [LARGE SCALE GENOMIC DNA]</scope>
    <source>
        <strain>ATCC 204508 / S288c</strain>
    </source>
</reference>
<reference key="3">
    <citation type="journal article" date="2014" name="G3 (Bethesda)">
        <title>The reference genome sequence of Saccharomyces cerevisiae: Then and now.</title>
        <authorList>
            <person name="Engel S.R."/>
            <person name="Dietrich F.S."/>
            <person name="Fisk D.G."/>
            <person name="Binkley G."/>
            <person name="Balakrishnan R."/>
            <person name="Costanzo M.C."/>
            <person name="Dwight S.S."/>
            <person name="Hitz B.C."/>
            <person name="Karra K."/>
            <person name="Nash R.S."/>
            <person name="Weng S."/>
            <person name="Wong E.D."/>
            <person name="Lloyd P."/>
            <person name="Skrzypek M.S."/>
            <person name="Miyasato S.R."/>
            <person name="Simison M."/>
            <person name="Cherry J.M."/>
        </authorList>
    </citation>
    <scope>GENOME REANNOTATION</scope>
    <source>
        <strain>ATCC 204508 / S288c</strain>
    </source>
</reference>
<protein>
    <recommendedName>
        <fullName>Protein MTH1</fullName>
    </recommendedName>
</protein>
<evidence type="ECO:0000256" key="1">
    <source>
        <dbReference type="SAM" id="MobiDB-lite"/>
    </source>
</evidence>
<evidence type="ECO:0000305" key="2"/>